<name>OR8D4_HUMAN</name>
<keyword id="KW-1003">Cell membrane</keyword>
<keyword id="KW-1015">Disulfide bond</keyword>
<keyword id="KW-0297">G-protein coupled receptor</keyword>
<keyword id="KW-0325">Glycoprotein</keyword>
<keyword id="KW-0472">Membrane</keyword>
<keyword id="KW-0552">Olfaction</keyword>
<keyword id="KW-0675">Receptor</keyword>
<keyword id="KW-1185">Reference proteome</keyword>
<keyword id="KW-0716">Sensory transduction</keyword>
<keyword id="KW-0807">Transducer</keyword>
<keyword id="KW-0812">Transmembrane</keyword>
<keyword id="KW-1133">Transmembrane helix</keyword>
<gene>
    <name type="primary">OR8D4</name>
</gene>
<organism>
    <name type="scientific">Homo sapiens</name>
    <name type="common">Human</name>
    <dbReference type="NCBI Taxonomy" id="9606"/>
    <lineage>
        <taxon>Eukaryota</taxon>
        <taxon>Metazoa</taxon>
        <taxon>Chordata</taxon>
        <taxon>Craniata</taxon>
        <taxon>Vertebrata</taxon>
        <taxon>Euteleostomi</taxon>
        <taxon>Mammalia</taxon>
        <taxon>Eutheria</taxon>
        <taxon>Euarchontoglires</taxon>
        <taxon>Primates</taxon>
        <taxon>Haplorrhini</taxon>
        <taxon>Catarrhini</taxon>
        <taxon>Hominidae</taxon>
        <taxon>Homo</taxon>
    </lineage>
</organism>
<accession>Q8NGM9</accession>
<accession>Q6IFE9</accession>
<feature type="chain" id="PRO_0000150661" description="Olfactory receptor 8D4">
    <location>
        <begin position="1"/>
        <end position="314"/>
    </location>
</feature>
<feature type="topological domain" description="Extracellular" evidence="1">
    <location>
        <begin position="1"/>
        <end position="25"/>
    </location>
</feature>
<feature type="transmembrane region" description="Helical; Name=1" evidence="1">
    <location>
        <begin position="26"/>
        <end position="46"/>
    </location>
</feature>
<feature type="topological domain" description="Cytoplasmic" evidence="1">
    <location>
        <begin position="47"/>
        <end position="54"/>
    </location>
</feature>
<feature type="transmembrane region" description="Helical; Name=2" evidence="1">
    <location>
        <begin position="55"/>
        <end position="75"/>
    </location>
</feature>
<feature type="topological domain" description="Extracellular" evidence="1">
    <location>
        <begin position="76"/>
        <end position="99"/>
    </location>
</feature>
<feature type="transmembrane region" description="Helical; Name=3" evidence="1">
    <location>
        <begin position="100"/>
        <end position="120"/>
    </location>
</feature>
<feature type="topological domain" description="Cytoplasmic" evidence="1">
    <location>
        <begin position="121"/>
        <end position="139"/>
    </location>
</feature>
<feature type="transmembrane region" description="Helical; Name=4" evidence="1">
    <location>
        <begin position="140"/>
        <end position="160"/>
    </location>
</feature>
<feature type="topological domain" description="Extracellular" evidence="1">
    <location>
        <begin position="161"/>
        <end position="197"/>
    </location>
</feature>
<feature type="transmembrane region" description="Helical; Name=5" evidence="1">
    <location>
        <begin position="198"/>
        <end position="217"/>
    </location>
</feature>
<feature type="topological domain" description="Cytoplasmic" evidence="1">
    <location>
        <begin position="218"/>
        <end position="237"/>
    </location>
</feature>
<feature type="transmembrane region" description="Helical; Name=6" evidence="1">
    <location>
        <begin position="238"/>
        <end position="258"/>
    </location>
</feature>
<feature type="topological domain" description="Extracellular" evidence="1">
    <location>
        <begin position="259"/>
        <end position="271"/>
    </location>
</feature>
<feature type="transmembrane region" description="Helical; Name=7" evidence="1">
    <location>
        <begin position="272"/>
        <end position="292"/>
    </location>
</feature>
<feature type="topological domain" description="Cytoplasmic" evidence="1">
    <location>
        <begin position="293"/>
        <end position="314"/>
    </location>
</feature>
<feature type="glycosylation site" description="N-linked (GlcNAc...) asparagine" evidence="1">
    <location>
        <position position="5"/>
    </location>
</feature>
<feature type="disulfide bond" evidence="2">
    <location>
        <begin position="97"/>
        <end position="189"/>
    </location>
</feature>
<feature type="sequence variant" id="VAR_034257" description="In dbSNP:rs17127947.">
    <original>L</original>
    <variation>R</variation>
    <location>
        <position position="55"/>
    </location>
</feature>
<feature type="sequence variant" id="VAR_034258" description="In dbSNP:rs17127950.">
    <original>I</original>
    <variation>V</variation>
    <location>
        <position position="92"/>
    </location>
</feature>
<feature type="sequence variant" id="VAR_053245" description="In dbSNP:rs10750250.">
    <original>C</original>
    <variation>Y</variation>
    <location>
        <position position="120"/>
    </location>
</feature>
<feature type="sequence variant" id="VAR_024118" description="In dbSNP:rs7926767.">
    <original>R</original>
    <variation>K</variation>
    <location>
        <position position="133"/>
    </location>
</feature>
<feature type="sequence variant" id="VAR_024119" description="In dbSNP:rs10790610.">
    <original>F</original>
    <variation>L</variation>
    <location>
        <position position="200"/>
    </location>
</feature>
<feature type="sequence variant" id="VAR_034259" description="In dbSNP:rs12270203.">
    <original>F</original>
    <variation>S</variation>
    <location>
        <position position="205"/>
    </location>
</feature>
<feature type="sequence variant" id="VAR_024120" description="In dbSNP:rs7942047.">
    <original>L</original>
    <variation>P</variation>
    <location>
        <position position="283"/>
    </location>
</feature>
<feature type="sequence variant" id="VAR_024121" description="In dbSNP:rs7927385.">
    <original>R</original>
    <variation>K</variation>
    <location>
        <position position="298"/>
    </location>
</feature>
<comment type="function">
    <text evidence="3">Odorant receptor.</text>
</comment>
<comment type="subcellular location">
    <subcellularLocation>
        <location>Cell membrane</location>
        <topology>Multi-pass membrane protein</topology>
    </subcellularLocation>
</comment>
<comment type="similarity">
    <text evidence="2">Belongs to the G-protein coupled receptor 1 family.</text>
</comment>
<comment type="online information" name="Human Olfactory Receptor Data Exploratorium (HORDE)">
    <link uri="http://genome.weizmann.ac.il/horde/card/index/symbol:OR8D4"/>
</comment>
<dbReference type="EMBL" id="AB065761">
    <property type="protein sequence ID" value="BAC05981.1"/>
    <property type="molecule type" value="Genomic_DNA"/>
</dbReference>
<dbReference type="EMBL" id="BC137180">
    <property type="protein sequence ID" value="AAI37181.1"/>
    <property type="molecule type" value="mRNA"/>
</dbReference>
<dbReference type="EMBL" id="BC137206">
    <property type="protein sequence ID" value="AAI37207.1"/>
    <property type="molecule type" value="mRNA"/>
</dbReference>
<dbReference type="EMBL" id="BK004313">
    <property type="protein sequence ID" value="DAA04711.1"/>
    <property type="molecule type" value="Genomic_DNA"/>
</dbReference>
<dbReference type="CCDS" id="CCDS31698.1"/>
<dbReference type="RefSeq" id="NP_001005197.1">
    <property type="nucleotide sequence ID" value="NM_001005197.2"/>
</dbReference>
<dbReference type="SMR" id="Q8NGM9"/>
<dbReference type="BioGRID" id="130777">
    <property type="interactions" value="1"/>
</dbReference>
<dbReference type="FunCoup" id="Q8NGM9">
    <property type="interactions" value="418"/>
</dbReference>
<dbReference type="STRING" id="9606.ENSP00000493391"/>
<dbReference type="GlyCosmos" id="Q8NGM9">
    <property type="glycosylation" value="1 site, No reported glycans"/>
</dbReference>
<dbReference type="GlyGen" id="Q8NGM9">
    <property type="glycosylation" value="1 site"/>
</dbReference>
<dbReference type="iPTMnet" id="Q8NGM9"/>
<dbReference type="PhosphoSitePlus" id="Q8NGM9"/>
<dbReference type="BioMuta" id="OR8D4"/>
<dbReference type="DMDM" id="38372729"/>
<dbReference type="MassIVE" id="Q8NGM9"/>
<dbReference type="PaxDb" id="9606-ENSP00000325381"/>
<dbReference type="Antibodypedia" id="56775">
    <property type="antibodies" value="71 antibodies from 18 providers"/>
</dbReference>
<dbReference type="DNASU" id="338662"/>
<dbReference type="Ensembl" id="ENST00000321355.3">
    <property type="protein sequence ID" value="ENSP00000325381.2"/>
    <property type="gene ID" value="ENSG00000181518.4"/>
</dbReference>
<dbReference type="Ensembl" id="ENST00000641687.1">
    <property type="protein sequence ID" value="ENSP00000493391.1"/>
    <property type="gene ID" value="ENSG00000181518.4"/>
</dbReference>
<dbReference type="GeneID" id="338662"/>
<dbReference type="KEGG" id="hsa:338662"/>
<dbReference type="MANE-Select" id="ENST00000641687.1">
    <property type="protein sequence ID" value="ENSP00000493391.1"/>
    <property type="RefSeq nucleotide sequence ID" value="NM_001005197.2"/>
    <property type="RefSeq protein sequence ID" value="NP_001005197.1"/>
</dbReference>
<dbReference type="UCSC" id="uc010saa.3">
    <property type="organism name" value="human"/>
</dbReference>
<dbReference type="AGR" id="HGNC:14840"/>
<dbReference type="CTD" id="338662"/>
<dbReference type="GeneCards" id="OR8D4"/>
<dbReference type="HGNC" id="HGNC:14840">
    <property type="gene designation" value="OR8D4"/>
</dbReference>
<dbReference type="HPA" id="ENSG00000181518">
    <property type="expression patterns" value="Not detected"/>
</dbReference>
<dbReference type="neXtProt" id="NX_Q8NGM9"/>
<dbReference type="PharmGKB" id="PA32762"/>
<dbReference type="VEuPathDB" id="HostDB:ENSG00000181518"/>
<dbReference type="eggNOG" id="ENOG502SJS1">
    <property type="taxonomic scope" value="Eukaryota"/>
</dbReference>
<dbReference type="GeneTree" id="ENSGT01040000240383"/>
<dbReference type="HOGENOM" id="CLU_012526_1_0_1"/>
<dbReference type="InParanoid" id="Q8NGM9"/>
<dbReference type="OMA" id="CIFIISE"/>
<dbReference type="OrthoDB" id="9444602at2759"/>
<dbReference type="PAN-GO" id="Q8NGM9">
    <property type="GO annotations" value="4 GO annotations based on evolutionary models"/>
</dbReference>
<dbReference type="PhylomeDB" id="Q8NGM9"/>
<dbReference type="TreeFam" id="TF352753"/>
<dbReference type="PathwayCommons" id="Q8NGM9"/>
<dbReference type="Reactome" id="R-HSA-9752946">
    <property type="pathway name" value="Expression and translocation of olfactory receptors"/>
</dbReference>
<dbReference type="BioGRID-ORCS" id="338662">
    <property type="hits" value="13 hits in 741 CRISPR screens"/>
</dbReference>
<dbReference type="GeneWiki" id="OR8D4"/>
<dbReference type="GenomeRNAi" id="338662"/>
<dbReference type="Pharos" id="Q8NGM9">
    <property type="development level" value="Tdark"/>
</dbReference>
<dbReference type="PRO" id="PR:Q8NGM9"/>
<dbReference type="Proteomes" id="UP000005640">
    <property type="component" value="Chromosome 11"/>
</dbReference>
<dbReference type="RNAct" id="Q8NGM9">
    <property type="molecule type" value="protein"/>
</dbReference>
<dbReference type="Bgee" id="ENSG00000181518">
    <property type="expression patterns" value="Expressed in male germ line stem cell (sensu Vertebrata) in testis and 1 other cell type or tissue"/>
</dbReference>
<dbReference type="GO" id="GO:0005886">
    <property type="term" value="C:plasma membrane"/>
    <property type="evidence" value="ECO:0007669"/>
    <property type="project" value="UniProtKB-SubCell"/>
</dbReference>
<dbReference type="GO" id="GO:0004930">
    <property type="term" value="F:G protein-coupled receptor activity"/>
    <property type="evidence" value="ECO:0007669"/>
    <property type="project" value="UniProtKB-KW"/>
</dbReference>
<dbReference type="GO" id="GO:0005549">
    <property type="term" value="F:odorant binding"/>
    <property type="evidence" value="ECO:0000318"/>
    <property type="project" value="GO_Central"/>
</dbReference>
<dbReference type="GO" id="GO:0004984">
    <property type="term" value="F:olfactory receptor activity"/>
    <property type="evidence" value="ECO:0000318"/>
    <property type="project" value="GO_Central"/>
</dbReference>
<dbReference type="GO" id="GO:0007186">
    <property type="term" value="P:G protein-coupled receptor signaling pathway"/>
    <property type="evidence" value="ECO:0000318"/>
    <property type="project" value="GO_Central"/>
</dbReference>
<dbReference type="GO" id="GO:0007608">
    <property type="term" value="P:sensory perception of smell"/>
    <property type="evidence" value="ECO:0000318"/>
    <property type="project" value="GO_Central"/>
</dbReference>
<dbReference type="CDD" id="cd15406">
    <property type="entry name" value="7tmA_OR8D-like"/>
    <property type="match status" value="1"/>
</dbReference>
<dbReference type="FunFam" id="1.10.1220.70:FF:000001">
    <property type="entry name" value="Olfactory receptor"/>
    <property type="match status" value="1"/>
</dbReference>
<dbReference type="FunFam" id="1.20.1070.10:FF:000004">
    <property type="entry name" value="Olfactory receptor"/>
    <property type="match status" value="1"/>
</dbReference>
<dbReference type="Gene3D" id="1.20.1070.10">
    <property type="entry name" value="Rhodopsin 7-helix transmembrane proteins"/>
    <property type="match status" value="1"/>
</dbReference>
<dbReference type="InterPro" id="IPR000276">
    <property type="entry name" value="GPCR_Rhodpsn"/>
</dbReference>
<dbReference type="InterPro" id="IPR017452">
    <property type="entry name" value="GPCR_Rhodpsn_7TM"/>
</dbReference>
<dbReference type="InterPro" id="IPR000725">
    <property type="entry name" value="Olfact_rcpt"/>
</dbReference>
<dbReference type="PANTHER" id="PTHR48018">
    <property type="entry name" value="OLFACTORY RECEPTOR"/>
    <property type="match status" value="1"/>
</dbReference>
<dbReference type="Pfam" id="PF13853">
    <property type="entry name" value="7tm_4"/>
    <property type="match status" value="1"/>
</dbReference>
<dbReference type="PRINTS" id="PR00237">
    <property type="entry name" value="GPCRRHODOPSN"/>
</dbReference>
<dbReference type="PRINTS" id="PR00245">
    <property type="entry name" value="OLFACTORYR"/>
</dbReference>
<dbReference type="SUPFAM" id="SSF81321">
    <property type="entry name" value="Family A G protein-coupled receptor-like"/>
    <property type="match status" value="1"/>
</dbReference>
<dbReference type="PROSITE" id="PS00237">
    <property type="entry name" value="G_PROTEIN_RECEP_F1_1"/>
    <property type="match status" value="1"/>
</dbReference>
<dbReference type="PROSITE" id="PS50262">
    <property type="entry name" value="G_PROTEIN_RECEP_F1_2"/>
    <property type="match status" value="1"/>
</dbReference>
<sequence>MGVKNHSTVTEFLLSGLTEQAELQLPLFCLFLGIYTVTVVGNLSMISIIRLNRQLHTPMYYFLSSLSFLDFCYSSVITPKMLSGFLCRDRSISYSGCMIQLFFFCVCVISECYMLAAMACDRYVAICSPLLYRVIMSPRVCSLLVAAVFSVGFTDAVIHGGCILRLSFCGSNIIKHYFCDIVPLIKLSCSSTYIDELLIFVIGGFNMVATSLTIIISYAFILTSILRIHSKKGRCKAFSTCSSHLTAVLMFYGSLMSMYLKPASSSSLTQEKVSSVFYTTVILMLNPLIYSLRNNEVRNALMKLLRRKISLSPG</sequence>
<proteinExistence type="evidence at transcript level"/>
<evidence type="ECO:0000255" key="1"/>
<evidence type="ECO:0000255" key="2">
    <source>
        <dbReference type="PROSITE-ProRule" id="PRU00521"/>
    </source>
</evidence>
<evidence type="ECO:0000305" key="3"/>
<protein>
    <recommendedName>
        <fullName>Olfactory receptor 8D4</fullName>
    </recommendedName>
    <alternativeName>
        <fullName>Olfactory receptor OR11-275</fullName>
    </alternativeName>
</protein>
<reference key="1">
    <citation type="submission" date="2001-07" db="EMBL/GenBank/DDBJ databases">
        <title>Genome-wide discovery and analysis of human seven transmembrane helix receptor genes.</title>
        <authorList>
            <person name="Suwa M."/>
            <person name="Sato T."/>
            <person name="Okouchi I."/>
            <person name="Arita M."/>
            <person name="Futami K."/>
            <person name="Matsumoto S."/>
            <person name="Tsutsumi S."/>
            <person name="Aburatani H."/>
            <person name="Asai K."/>
            <person name="Akiyama Y."/>
        </authorList>
    </citation>
    <scope>NUCLEOTIDE SEQUENCE [GENOMIC DNA]</scope>
</reference>
<reference key="2">
    <citation type="journal article" date="2004" name="Genome Res.">
        <title>The status, quality, and expansion of the NIH full-length cDNA project: the Mammalian Gene Collection (MGC).</title>
        <authorList>
            <consortium name="The MGC Project Team"/>
        </authorList>
    </citation>
    <scope>NUCLEOTIDE SEQUENCE [LARGE SCALE MRNA]</scope>
</reference>
<reference key="3">
    <citation type="journal article" date="2004" name="Proc. Natl. Acad. Sci. U.S.A.">
        <title>The human olfactory receptor gene family.</title>
        <authorList>
            <person name="Malnic B."/>
            <person name="Godfrey P.A."/>
            <person name="Buck L.B."/>
        </authorList>
    </citation>
    <scope>IDENTIFICATION</scope>
</reference>
<reference key="4">
    <citation type="journal article" date="2004" name="Proc. Natl. Acad. Sci. U.S.A.">
        <authorList>
            <person name="Malnic B."/>
            <person name="Godfrey P.A."/>
            <person name="Buck L.B."/>
        </authorList>
    </citation>
    <scope>ERRATUM OF PUBMED:14983052</scope>
</reference>